<organism>
    <name type="scientific">Pseudomonas paraeruginosa (strain DSM 24068 / PA7)</name>
    <name type="common">Pseudomonas aeruginosa (strain PA7)</name>
    <dbReference type="NCBI Taxonomy" id="381754"/>
    <lineage>
        <taxon>Bacteria</taxon>
        <taxon>Pseudomonadati</taxon>
        <taxon>Pseudomonadota</taxon>
        <taxon>Gammaproteobacteria</taxon>
        <taxon>Pseudomonadales</taxon>
        <taxon>Pseudomonadaceae</taxon>
        <taxon>Pseudomonas</taxon>
        <taxon>Pseudomonas paraeruginosa</taxon>
    </lineage>
</organism>
<protein>
    <recommendedName>
        <fullName evidence="1">Large ribosomal subunit protein bL17</fullName>
    </recommendedName>
    <alternativeName>
        <fullName evidence="2">50S ribosomal protein L17</fullName>
    </alternativeName>
</protein>
<feature type="chain" id="PRO_1000055915" description="Large ribosomal subunit protein bL17">
    <location>
        <begin position="1"/>
        <end position="129"/>
    </location>
</feature>
<name>RL17_PSEP7</name>
<sequence length="129" mass="14504">MRHRKSGRHLSRTSAHRKAMFQNMAVSLFEHELIKTTLPKAKELRRVAEPLITLAKEDSVANRRLAFDRTRSKAAVGKLFNDLGKRYANRPGGYLRILKCGFRAGDNAPMAYVELVDRPVGGEVVEAAE</sequence>
<dbReference type="EMBL" id="CP000744">
    <property type="protein sequence ID" value="ABR82360.1"/>
    <property type="molecule type" value="Genomic_DNA"/>
</dbReference>
<dbReference type="RefSeq" id="WP_003093672.1">
    <property type="nucleotide sequence ID" value="NC_009656.1"/>
</dbReference>
<dbReference type="SMR" id="A6UZL4"/>
<dbReference type="GeneID" id="77219224"/>
<dbReference type="KEGG" id="pap:PSPA7_0863"/>
<dbReference type="HOGENOM" id="CLU_074407_2_0_6"/>
<dbReference type="Proteomes" id="UP000001582">
    <property type="component" value="Chromosome"/>
</dbReference>
<dbReference type="GO" id="GO:0022625">
    <property type="term" value="C:cytosolic large ribosomal subunit"/>
    <property type="evidence" value="ECO:0007669"/>
    <property type="project" value="TreeGrafter"/>
</dbReference>
<dbReference type="GO" id="GO:0003735">
    <property type="term" value="F:structural constituent of ribosome"/>
    <property type="evidence" value="ECO:0007669"/>
    <property type="project" value="InterPro"/>
</dbReference>
<dbReference type="GO" id="GO:0006412">
    <property type="term" value="P:translation"/>
    <property type="evidence" value="ECO:0007669"/>
    <property type="project" value="UniProtKB-UniRule"/>
</dbReference>
<dbReference type="FunFam" id="3.90.1030.10:FF:000001">
    <property type="entry name" value="50S ribosomal protein L17"/>
    <property type="match status" value="1"/>
</dbReference>
<dbReference type="Gene3D" id="3.90.1030.10">
    <property type="entry name" value="Ribosomal protein L17"/>
    <property type="match status" value="1"/>
</dbReference>
<dbReference type="HAMAP" id="MF_01368">
    <property type="entry name" value="Ribosomal_bL17"/>
    <property type="match status" value="1"/>
</dbReference>
<dbReference type="InterPro" id="IPR000456">
    <property type="entry name" value="Ribosomal_bL17"/>
</dbReference>
<dbReference type="InterPro" id="IPR047859">
    <property type="entry name" value="Ribosomal_bL17_CS"/>
</dbReference>
<dbReference type="InterPro" id="IPR036373">
    <property type="entry name" value="Ribosomal_bL17_sf"/>
</dbReference>
<dbReference type="NCBIfam" id="TIGR00059">
    <property type="entry name" value="L17"/>
    <property type="match status" value="1"/>
</dbReference>
<dbReference type="PANTHER" id="PTHR14413:SF16">
    <property type="entry name" value="LARGE RIBOSOMAL SUBUNIT PROTEIN BL17M"/>
    <property type="match status" value="1"/>
</dbReference>
<dbReference type="PANTHER" id="PTHR14413">
    <property type="entry name" value="RIBOSOMAL PROTEIN L17"/>
    <property type="match status" value="1"/>
</dbReference>
<dbReference type="Pfam" id="PF01196">
    <property type="entry name" value="Ribosomal_L17"/>
    <property type="match status" value="1"/>
</dbReference>
<dbReference type="SUPFAM" id="SSF64263">
    <property type="entry name" value="Prokaryotic ribosomal protein L17"/>
    <property type="match status" value="1"/>
</dbReference>
<dbReference type="PROSITE" id="PS01167">
    <property type="entry name" value="RIBOSOMAL_L17"/>
    <property type="match status" value="1"/>
</dbReference>
<comment type="subunit">
    <text evidence="1">Part of the 50S ribosomal subunit. Contacts protein L32.</text>
</comment>
<comment type="similarity">
    <text evidence="1">Belongs to the bacterial ribosomal protein bL17 family.</text>
</comment>
<gene>
    <name evidence="1" type="primary">rplQ</name>
    <name type="ordered locus">PSPA7_0863</name>
</gene>
<accession>A6UZL4</accession>
<keyword id="KW-0687">Ribonucleoprotein</keyword>
<keyword id="KW-0689">Ribosomal protein</keyword>
<proteinExistence type="inferred from homology"/>
<evidence type="ECO:0000255" key="1">
    <source>
        <dbReference type="HAMAP-Rule" id="MF_01368"/>
    </source>
</evidence>
<evidence type="ECO:0000305" key="2"/>
<reference key="1">
    <citation type="submission" date="2007-06" db="EMBL/GenBank/DDBJ databases">
        <authorList>
            <person name="Dodson R.J."/>
            <person name="Harkins D."/>
            <person name="Paulsen I.T."/>
        </authorList>
    </citation>
    <scope>NUCLEOTIDE SEQUENCE [LARGE SCALE GENOMIC DNA]</scope>
    <source>
        <strain>DSM 24068 / PA7</strain>
    </source>
</reference>